<dbReference type="EMBL" id="AAFI02000008">
    <property type="protein sequence ID" value="EAL70999.1"/>
    <property type="molecule type" value="Genomic_DNA"/>
</dbReference>
<dbReference type="RefSeq" id="XP_644851.1">
    <property type="nucleotide sequence ID" value="XM_639759.1"/>
</dbReference>
<dbReference type="PaxDb" id="44689-DDB0302449"/>
<dbReference type="EnsemblProtists" id="EAL70999">
    <property type="protein sequence ID" value="EAL70999"/>
    <property type="gene ID" value="DDB_G0272724"/>
</dbReference>
<dbReference type="GeneID" id="8618532"/>
<dbReference type="KEGG" id="ddi:DDB_G0272724"/>
<dbReference type="dictyBase" id="DDB_G0272724"/>
<dbReference type="HOGENOM" id="CLU_189481_0_0_1"/>
<dbReference type="InParanoid" id="Q86IK1"/>
<dbReference type="OMA" id="VYETGHH"/>
<dbReference type="PRO" id="PR:Q86IK1"/>
<dbReference type="Proteomes" id="UP000002195">
    <property type="component" value="Chromosome 2"/>
</dbReference>
<dbReference type="GO" id="GO:0006950">
    <property type="term" value="P:response to stress"/>
    <property type="evidence" value="ECO:0000318"/>
    <property type="project" value="GO_Central"/>
</dbReference>
<organism>
    <name type="scientific">Dictyostelium discoideum</name>
    <name type="common">Social amoeba</name>
    <dbReference type="NCBI Taxonomy" id="44689"/>
    <lineage>
        <taxon>Eukaryota</taxon>
        <taxon>Amoebozoa</taxon>
        <taxon>Evosea</taxon>
        <taxon>Eumycetozoa</taxon>
        <taxon>Dictyostelia</taxon>
        <taxon>Dictyosteliales</taxon>
        <taxon>Dictyosteliaceae</taxon>
        <taxon>Dictyostelium</taxon>
    </lineage>
</organism>
<reference key="1">
    <citation type="journal article" date="2002" name="Nature">
        <title>Sequence and analysis of chromosome 2 of Dictyostelium discoideum.</title>
        <authorList>
            <person name="Gloeckner G."/>
            <person name="Eichinger L."/>
            <person name="Szafranski K."/>
            <person name="Pachebat J.A."/>
            <person name="Bankier A.T."/>
            <person name="Dear P.H."/>
            <person name="Lehmann R."/>
            <person name="Baumgart C."/>
            <person name="Parra G."/>
            <person name="Abril J.F."/>
            <person name="Guigo R."/>
            <person name="Kumpf K."/>
            <person name="Tunggal B."/>
            <person name="Cox E.C."/>
            <person name="Quail M.A."/>
            <person name="Platzer M."/>
            <person name="Rosenthal A."/>
            <person name="Noegel A.A."/>
        </authorList>
    </citation>
    <scope>NUCLEOTIDE SEQUENCE [LARGE SCALE GENOMIC DNA]</scope>
    <source>
        <strain>AX4</strain>
    </source>
</reference>
<reference key="2">
    <citation type="journal article" date="2005" name="Nature">
        <title>The genome of the social amoeba Dictyostelium discoideum.</title>
        <authorList>
            <person name="Eichinger L."/>
            <person name="Pachebat J.A."/>
            <person name="Gloeckner G."/>
            <person name="Rajandream M.A."/>
            <person name="Sucgang R."/>
            <person name="Berriman M."/>
            <person name="Song J."/>
            <person name="Olsen R."/>
            <person name="Szafranski K."/>
            <person name="Xu Q."/>
            <person name="Tunggal B."/>
            <person name="Kummerfeld S."/>
            <person name="Madera M."/>
            <person name="Konfortov B.A."/>
            <person name="Rivero F."/>
            <person name="Bankier A.T."/>
            <person name="Lehmann R."/>
            <person name="Hamlin N."/>
            <person name="Davies R."/>
            <person name="Gaudet P."/>
            <person name="Fey P."/>
            <person name="Pilcher K."/>
            <person name="Chen G."/>
            <person name="Saunders D."/>
            <person name="Sodergren E.J."/>
            <person name="Davis P."/>
            <person name="Kerhornou A."/>
            <person name="Nie X."/>
            <person name="Hall N."/>
            <person name="Anjard C."/>
            <person name="Hemphill L."/>
            <person name="Bason N."/>
            <person name="Farbrother P."/>
            <person name="Desany B."/>
            <person name="Just E."/>
            <person name="Morio T."/>
            <person name="Rost R."/>
            <person name="Churcher C.M."/>
            <person name="Cooper J."/>
            <person name="Haydock S."/>
            <person name="van Driessche N."/>
            <person name="Cronin A."/>
            <person name="Goodhead I."/>
            <person name="Muzny D.M."/>
            <person name="Mourier T."/>
            <person name="Pain A."/>
            <person name="Lu M."/>
            <person name="Harper D."/>
            <person name="Lindsay R."/>
            <person name="Hauser H."/>
            <person name="James K.D."/>
            <person name="Quiles M."/>
            <person name="Madan Babu M."/>
            <person name="Saito T."/>
            <person name="Buchrieser C."/>
            <person name="Wardroper A."/>
            <person name="Felder M."/>
            <person name="Thangavelu M."/>
            <person name="Johnson D."/>
            <person name="Knights A."/>
            <person name="Loulseged H."/>
            <person name="Mungall K.L."/>
            <person name="Oliver K."/>
            <person name="Price C."/>
            <person name="Quail M.A."/>
            <person name="Urushihara H."/>
            <person name="Hernandez J."/>
            <person name="Rabbinowitsch E."/>
            <person name="Steffen D."/>
            <person name="Sanders M."/>
            <person name="Ma J."/>
            <person name="Kohara Y."/>
            <person name="Sharp S."/>
            <person name="Simmonds M.N."/>
            <person name="Spiegler S."/>
            <person name="Tivey A."/>
            <person name="Sugano S."/>
            <person name="White B."/>
            <person name="Walker D."/>
            <person name="Woodward J.R."/>
            <person name="Winckler T."/>
            <person name="Tanaka Y."/>
            <person name="Shaulsky G."/>
            <person name="Schleicher M."/>
            <person name="Weinstock G.M."/>
            <person name="Rosenthal A."/>
            <person name="Cox E.C."/>
            <person name="Chisholm R.L."/>
            <person name="Gibbs R.A."/>
            <person name="Loomis W.F."/>
            <person name="Platzer M."/>
            <person name="Kay R.R."/>
            <person name="Williams J.G."/>
            <person name="Dear P.H."/>
            <person name="Noegel A.A."/>
            <person name="Barrell B.G."/>
            <person name="Kuspa A."/>
        </authorList>
    </citation>
    <scope>NUCLEOTIDE SEQUENCE [LARGE SCALE GENOMIC DNA]</scope>
    <source>
        <strain>AX4</strain>
    </source>
</reference>
<protein>
    <recommendedName>
        <fullName>Uncharacterized protein DDB_G0272724</fullName>
    </recommendedName>
</protein>
<proteinExistence type="predicted"/>
<gene>
    <name type="ORF">DDB_G0272724</name>
</gene>
<name>Y8872_DICDI</name>
<accession>Q86IK1</accession>
<accession>Q559G5</accession>
<keyword id="KW-1185">Reference proteome</keyword>
<feature type="chain" id="PRO_0000348173" description="Uncharacterized protein DDB_G0272724">
    <location>
        <begin position="1"/>
        <end position="104"/>
    </location>
</feature>
<sequence>MGHHHHHHGHHGHHHHDTITYTTGVYGAPVVPMVQPMVQPMVQPMPIYGQPPMMGAPVMVPPPMMGAPVMVPQPMVYPTTTVVYETGHHHHHGHHHGHHHGHFF</sequence>